<keyword id="KW-0963">Cytoplasm</keyword>
<keyword id="KW-0620">Polyamine biosynthesis</keyword>
<keyword id="KW-1185">Reference proteome</keyword>
<keyword id="KW-0745">Spermidine biosynthesis</keyword>
<keyword id="KW-0808">Transferase</keyword>
<comment type="function">
    <text evidence="1">Catalyzes the irreversible transfer of a propylamine group from the amino donor S-adenosylmethioninamine (decarboxy-AdoMet) to putrescine (1,4-diaminobutane) to yield spermidine.</text>
</comment>
<comment type="catalytic activity">
    <reaction evidence="1">
        <text>S-adenosyl 3-(methylsulfanyl)propylamine + putrescine = S-methyl-5'-thioadenosine + spermidine + H(+)</text>
        <dbReference type="Rhea" id="RHEA:12721"/>
        <dbReference type="ChEBI" id="CHEBI:15378"/>
        <dbReference type="ChEBI" id="CHEBI:17509"/>
        <dbReference type="ChEBI" id="CHEBI:57443"/>
        <dbReference type="ChEBI" id="CHEBI:57834"/>
        <dbReference type="ChEBI" id="CHEBI:326268"/>
        <dbReference type="EC" id="2.5.1.16"/>
    </reaction>
</comment>
<comment type="pathway">
    <text evidence="1">Amine and polyamine biosynthesis; spermidine biosynthesis; spermidine from putrescine: step 1/1.</text>
</comment>
<comment type="subunit">
    <text evidence="1">Homodimer or homotetramer.</text>
</comment>
<comment type="subcellular location">
    <subcellularLocation>
        <location evidence="1">Cytoplasm</location>
    </subcellularLocation>
</comment>
<comment type="similarity">
    <text evidence="1">Belongs to the spermidine/spermine synthase family.</text>
</comment>
<sequence>MPKHRKQSKIKIYRITNYKKDKRSELDSNKFELEQQAVENKQDKQGKQDNQVQSENVVIVPTDSHNLDIWDEISLKEIQAGEHTNLFAEQSNYQNINLLQVSDIRLYLDKQLQFSSVDEQIYHEALVHPIMSKVIDPKRVLILGGGDGLALREVLKYETVLHVDLVDLDGSMIDMARNVPELVSLNKSAFFDNRVNTHVCDAKEFLSSPSSLYDVIIIDFPDPATELLSTLYTSELFARIATFLTEDGAFVCQSNSPADAPLVYWSIGNTIEHAGLTVKSYHTIVPSFGTDWGFHIAANSVYVLDQIEQLYVVPTPRTLPSLLFPLFQFKEEHLEQRNFALLNSESNLILHQCYKKEMEF</sequence>
<name>SPEE2_BACAN</name>
<dbReference type="EC" id="2.5.1.16" evidence="1"/>
<dbReference type="EMBL" id="AE016879">
    <property type="protein sequence ID" value="AAP29099.1"/>
    <property type="molecule type" value="Genomic_DNA"/>
</dbReference>
<dbReference type="EMBL" id="AE017334">
    <property type="protein sequence ID" value="AAT34583.1"/>
    <property type="molecule type" value="Genomic_DNA"/>
</dbReference>
<dbReference type="EMBL" id="AE017225">
    <property type="protein sequence ID" value="AAT57349.1"/>
    <property type="molecule type" value="Genomic_DNA"/>
</dbReference>
<dbReference type="RefSeq" id="NP_847613.1">
    <property type="nucleotide sequence ID" value="NC_003997.3"/>
</dbReference>
<dbReference type="RefSeq" id="WP_001123954.1">
    <property type="nucleotide sequence ID" value="NZ_WXXJ01000001.1"/>
</dbReference>
<dbReference type="RefSeq" id="YP_031299.1">
    <property type="nucleotide sequence ID" value="NC_005945.1"/>
</dbReference>
<dbReference type="SMR" id="Q81X05"/>
<dbReference type="STRING" id="261594.GBAA_5445"/>
<dbReference type="DNASU" id="1085053"/>
<dbReference type="GeneID" id="45025043"/>
<dbReference type="KEGG" id="ban:BA_5445"/>
<dbReference type="KEGG" id="banh:HYU01_26595"/>
<dbReference type="KEGG" id="bar:GBAA_5445"/>
<dbReference type="KEGG" id="bat:BAS5060"/>
<dbReference type="PATRIC" id="fig|198094.11.peg.5404"/>
<dbReference type="eggNOG" id="COG4262">
    <property type="taxonomic scope" value="Bacteria"/>
</dbReference>
<dbReference type="HOGENOM" id="CLU_039263_0_0_9"/>
<dbReference type="OMA" id="QCYKQEM"/>
<dbReference type="OrthoDB" id="9793120at2"/>
<dbReference type="UniPathway" id="UPA00248">
    <property type="reaction ID" value="UER00314"/>
</dbReference>
<dbReference type="Proteomes" id="UP000000427">
    <property type="component" value="Chromosome"/>
</dbReference>
<dbReference type="Proteomes" id="UP000000594">
    <property type="component" value="Chromosome"/>
</dbReference>
<dbReference type="GO" id="GO:0005737">
    <property type="term" value="C:cytoplasm"/>
    <property type="evidence" value="ECO:0007669"/>
    <property type="project" value="UniProtKB-SubCell"/>
</dbReference>
<dbReference type="GO" id="GO:0004766">
    <property type="term" value="F:spermidine synthase activity"/>
    <property type="evidence" value="ECO:0007669"/>
    <property type="project" value="UniProtKB-UniRule"/>
</dbReference>
<dbReference type="GO" id="GO:0010487">
    <property type="term" value="F:thermospermine synthase activity"/>
    <property type="evidence" value="ECO:0007669"/>
    <property type="project" value="UniProtKB-ARBA"/>
</dbReference>
<dbReference type="GO" id="GO:0008295">
    <property type="term" value="P:spermidine biosynthetic process"/>
    <property type="evidence" value="ECO:0007669"/>
    <property type="project" value="UniProtKB-UniRule"/>
</dbReference>
<dbReference type="CDD" id="cd02440">
    <property type="entry name" value="AdoMet_MTases"/>
    <property type="match status" value="1"/>
</dbReference>
<dbReference type="FunFam" id="3.40.50.150:FF:000088">
    <property type="entry name" value="Polyamine aminopropyltransferase"/>
    <property type="match status" value="1"/>
</dbReference>
<dbReference type="Gene3D" id="3.40.50.150">
    <property type="entry name" value="Vaccinia Virus protein VP39"/>
    <property type="match status" value="1"/>
</dbReference>
<dbReference type="HAMAP" id="MF_00198">
    <property type="entry name" value="Spermidine_synth"/>
    <property type="match status" value="1"/>
</dbReference>
<dbReference type="InterPro" id="IPR030374">
    <property type="entry name" value="PABS"/>
</dbReference>
<dbReference type="InterPro" id="IPR030373">
    <property type="entry name" value="PABS_CS"/>
</dbReference>
<dbReference type="InterPro" id="IPR029063">
    <property type="entry name" value="SAM-dependent_MTases_sf"/>
</dbReference>
<dbReference type="InterPro" id="IPR001045">
    <property type="entry name" value="Spermi_synthase"/>
</dbReference>
<dbReference type="NCBIfam" id="NF002435">
    <property type="entry name" value="PRK01581.1"/>
    <property type="match status" value="1"/>
</dbReference>
<dbReference type="PANTHER" id="PTHR43317">
    <property type="entry name" value="THERMOSPERMINE SYNTHASE ACAULIS5"/>
    <property type="match status" value="1"/>
</dbReference>
<dbReference type="PANTHER" id="PTHR43317:SF1">
    <property type="entry name" value="THERMOSPERMINE SYNTHASE ACAULIS5"/>
    <property type="match status" value="1"/>
</dbReference>
<dbReference type="Pfam" id="PF01564">
    <property type="entry name" value="Spermine_synth"/>
    <property type="match status" value="1"/>
</dbReference>
<dbReference type="SUPFAM" id="SSF53335">
    <property type="entry name" value="S-adenosyl-L-methionine-dependent methyltransferases"/>
    <property type="match status" value="1"/>
</dbReference>
<dbReference type="PROSITE" id="PS01330">
    <property type="entry name" value="PABS_1"/>
    <property type="match status" value="1"/>
</dbReference>
<dbReference type="PROSITE" id="PS51006">
    <property type="entry name" value="PABS_2"/>
    <property type="match status" value="1"/>
</dbReference>
<proteinExistence type="inferred from homology"/>
<accession>Q81X05</accession>
<accession>Q6HQT9</accession>
<accession>Q6KK59</accession>
<evidence type="ECO:0000255" key="1">
    <source>
        <dbReference type="HAMAP-Rule" id="MF_00198"/>
    </source>
</evidence>
<reference key="1">
    <citation type="journal article" date="2003" name="Nature">
        <title>The genome sequence of Bacillus anthracis Ames and comparison to closely related bacteria.</title>
        <authorList>
            <person name="Read T.D."/>
            <person name="Peterson S.N."/>
            <person name="Tourasse N.J."/>
            <person name="Baillie L.W."/>
            <person name="Paulsen I.T."/>
            <person name="Nelson K.E."/>
            <person name="Tettelin H."/>
            <person name="Fouts D.E."/>
            <person name="Eisen J.A."/>
            <person name="Gill S.R."/>
            <person name="Holtzapple E.K."/>
            <person name="Okstad O.A."/>
            <person name="Helgason E."/>
            <person name="Rilstone J."/>
            <person name="Wu M."/>
            <person name="Kolonay J.F."/>
            <person name="Beanan M.J."/>
            <person name="Dodson R.J."/>
            <person name="Brinkac L.M."/>
            <person name="Gwinn M.L."/>
            <person name="DeBoy R.T."/>
            <person name="Madpu R."/>
            <person name="Daugherty S.C."/>
            <person name="Durkin A.S."/>
            <person name="Haft D.H."/>
            <person name="Nelson W.C."/>
            <person name="Peterson J.D."/>
            <person name="Pop M."/>
            <person name="Khouri H.M."/>
            <person name="Radune D."/>
            <person name="Benton J.L."/>
            <person name="Mahamoud Y."/>
            <person name="Jiang L."/>
            <person name="Hance I.R."/>
            <person name="Weidman J.F."/>
            <person name="Berry K.J."/>
            <person name="Plaut R.D."/>
            <person name="Wolf A.M."/>
            <person name="Watkins K.L."/>
            <person name="Nierman W.C."/>
            <person name="Hazen A."/>
            <person name="Cline R.T."/>
            <person name="Redmond C."/>
            <person name="Thwaite J.E."/>
            <person name="White O."/>
            <person name="Salzberg S.L."/>
            <person name="Thomason B."/>
            <person name="Friedlander A.M."/>
            <person name="Koehler T.M."/>
            <person name="Hanna P.C."/>
            <person name="Kolstoe A.-B."/>
            <person name="Fraser C.M."/>
        </authorList>
    </citation>
    <scope>NUCLEOTIDE SEQUENCE [LARGE SCALE GENOMIC DNA]</scope>
    <source>
        <strain>Ames / isolate Porton</strain>
    </source>
</reference>
<reference key="2">
    <citation type="journal article" date="2009" name="J. Bacteriol.">
        <title>The complete genome sequence of Bacillus anthracis Ames 'Ancestor'.</title>
        <authorList>
            <person name="Ravel J."/>
            <person name="Jiang L."/>
            <person name="Stanley S.T."/>
            <person name="Wilson M.R."/>
            <person name="Decker R.S."/>
            <person name="Read T.D."/>
            <person name="Worsham P."/>
            <person name="Keim P.S."/>
            <person name="Salzberg S.L."/>
            <person name="Fraser-Liggett C.M."/>
            <person name="Rasko D.A."/>
        </authorList>
    </citation>
    <scope>NUCLEOTIDE SEQUENCE [LARGE SCALE GENOMIC DNA]</scope>
    <source>
        <strain>Ames ancestor</strain>
    </source>
</reference>
<reference key="3">
    <citation type="submission" date="2004-01" db="EMBL/GenBank/DDBJ databases">
        <title>Complete genome sequence of Bacillus anthracis Sterne.</title>
        <authorList>
            <person name="Brettin T.S."/>
            <person name="Bruce D."/>
            <person name="Challacombe J.F."/>
            <person name="Gilna P."/>
            <person name="Han C."/>
            <person name="Hill K."/>
            <person name="Hitchcock P."/>
            <person name="Jackson P."/>
            <person name="Keim P."/>
            <person name="Longmire J."/>
            <person name="Lucas S."/>
            <person name="Okinaka R."/>
            <person name="Richardson P."/>
            <person name="Rubin E."/>
            <person name="Tice H."/>
        </authorList>
    </citation>
    <scope>NUCLEOTIDE SEQUENCE [LARGE SCALE GENOMIC DNA]</scope>
    <source>
        <strain>Sterne</strain>
    </source>
</reference>
<feature type="chain" id="PRO_0000156466" description="Polyamine aminopropyltransferase 2">
    <location>
        <begin position="1"/>
        <end position="360"/>
    </location>
</feature>
<feature type="domain" description="PABS" evidence="1">
    <location>
        <begin position="68"/>
        <end position="299"/>
    </location>
</feature>
<feature type="active site" description="Proton acceptor" evidence="1">
    <location>
        <position position="219"/>
    </location>
</feature>
<feature type="binding site" evidence="1">
    <location>
        <position position="94"/>
    </location>
    <ligand>
        <name>S-methyl-5'-thioadenosine</name>
        <dbReference type="ChEBI" id="CHEBI:17509"/>
    </ligand>
</feature>
<feature type="binding site" evidence="1">
    <location>
        <position position="123"/>
    </location>
    <ligand>
        <name>spermidine</name>
        <dbReference type="ChEBI" id="CHEBI:57834"/>
    </ligand>
</feature>
<feature type="binding site" evidence="1">
    <location>
        <position position="147"/>
    </location>
    <ligand>
        <name>spermidine</name>
        <dbReference type="ChEBI" id="CHEBI:57834"/>
    </ligand>
</feature>
<feature type="binding site" evidence="1">
    <location>
        <position position="167"/>
    </location>
    <ligand>
        <name>S-methyl-5'-thioadenosine</name>
        <dbReference type="ChEBI" id="CHEBI:17509"/>
    </ligand>
</feature>
<feature type="binding site" evidence="1">
    <location>
        <begin position="201"/>
        <end position="202"/>
    </location>
    <ligand>
        <name>S-methyl-5'-thioadenosine</name>
        <dbReference type="ChEBI" id="CHEBI:17509"/>
    </ligand>
</feature>
<gene>
    <name evidence="1" type="primary">speE2</name>
    <name type="ordered locus">BA_5445</name>
    <name type="ordered locus">GBAA_5445</name>
    <name type="ordered locus">BAS5060</name>
</gene>
<protein>
    <recommendedName>
        <fullName evidence="1">Polyamine aminopropyltransferase 2</fullName>
    </recommendedName>
    <alternativeName>
        <fullName evidence="1">Putrescine aminopropyltransferase 2</fullName>
        <shortName evidence="1">PAPT 2</shortName>
    </alternativeName>
    <alternativeName>
        <fullName evidence="1">Spermidine synthase 2</fullName>
        <shortName evidence="1">SPDS 2</shortName>
        <shortName evidence="1">SPDSY 2</shortName>
        <ecNumber evidence="1">2.5.1.16</ecNumber>
    </alternativeName>
</protein>
<organism>
    <name type="scientific">Bacillus anthracis</name>
    <dbReference type="NCBI Taxonomy" id="1392"/>
    <lineage>
        <taxon>Bacteria</taxon>
        <taxon>Bacillati</taxon>
        <taxon>Bacillota</taxon>
        <taxon>Bacilli</taxon>
        <taxon>Bacillales</taxon>
        <taxon>Bacillaceae</taxon>
        <taxon>Bacillus</taxon>
        <taxon>Bacillus cereus group</taxon>
    </lineage>
</organism>